<reference key="1">
    <citation type="journal article" date="1995" name="J. Mol. Evol.">
        <title>Mammalian mitochondrial DNA evolution: a comparison of the cytochrome b and cytochrome c oxidase II genes.</title>
        <authorList>
            <person name="Honeycutt R.L."/>
            <person name="Nedbal M.A."/>
            <person name="Adkins R.M."/>
            <person name="Janecek L.L."/>
        </authorList>
    </citation>
    <scope>NUCLEOTIDE SEQUENCE [GENOMIC DNA]</scope>
</reference>
<accession>P50689</accession>
<proteinExistence type="inferred from homology"/>
<feature type="chain" id="PRO_0000183601" description="Cytochrome c oxidase subunit 2">
    <location>
        <begin position="1"/>
        <end position="227"/>
    </location>
</feature>
<feature type="topological domain" description="Mitochondrial intermembrane" evidence="3">
    <location>
        <begin position="1"/>
        <end position="14"/>
    </location>
</feature>
<feature type="transmembrane region" description="Helical; Name=I" evidence="3">
    <location>
        <begin position="15"/>
        <end position="45"/>
    </location>
</feature>
<feature type="topological domain" description="Mitochondrial matrix" evidence="3">
    <location>
        <begin position="46"/>
        <end position="59"/>
    </location>
</feature>
<feature type="transmembrane region" description="Helical; Name=II" evidence="3">
    <location>
        <begin position="60"/>
        <end position="87"/>
    </location>
</feature>
<feature type="topological domain" description="Mitochondrial intermembrane" evidence="3">
    <location>
        <begin position="88"/>
        <end position="227"/>
    </location>
</feature>
<feature type="binding site" evidence="3">
    <location>
        <position position="161"/>
    </location>
    <ligand>
        <name>Cu cation</name>
        <dbReference type="ChEBI" id="CHEBI:23378"/>
        <label>A1</label>
    </ligand>
</feature>
<feature type="binding site" evidence="3">
    <location>
        <position position="196"/>
    </location>
    <ligand>
        <name>Cu cation</name>
        <dbReference type="ChEBI" id="CHEBI:23378"/>
        <label>A1</label>
    </ligand>
</feature>
<feature type="binding site" evidence="3">
    <location>
        <position position="196"/>
    </location>
    <ligand>
        <name>Cu cation</name>
        <dbReference type="ChEBI" id="CHEBI:23378"/>
        <label>A2</label>
    </ligand>
</feature>
<feature type="binding site" evidence="3">
    <location>
        <position position="198"/>
    </location>
    <ligand>
        <name>Cu cation</name>
        <dbReference type="ChEBI" id="CHEBI:23378"/>
        <label>A2</label>
    </ligand>
</feature>
<feature type="binding site" evidence="3">
    <location>
        <position position="198"/>
    </location>
    <ligand>
        <name>Mg(2+)</name>
        <dbReference type="ChEBI" id="CHEBI:18420"/>
        <note>ligand shared with MT-CO1</note>
    </ligand>
</feature>
<feature type="binding site" evidence="3">
    <location>
        <position position="200"/>
    </location>
    <ligand>
        <name>Cu cation</name>
        <dbReference type="ChEBI" id="CHEBI:23378"/>
        <label>A1</label>
    </ligand>
</feature>
<feature type="binding site" evidence="3">
    <location>
        <position position="200"/>
    </location>
    <ligand>
        <name>Cu cation</name>
        <dbReference type="ChEBI" id="CHEBI:23378"/>
        <label>A2</label>
    </ligand>
</feature>
<feature type="binding site" evidence="3">
    <location>
        <position position="204"/>
    </location>
    <ligand>
        <name>Cu cation</name>
        <dbReference type="ChEBI" id="CHEBI:23378"/>
        <label>A2</label>
    </ligand>
</feature>
<feature type="binding site" evidence="3">
    <location>
        <position position="207"/>
    </location>
    <ligand>
        <name>Cu cation</name>
        <dbReference type="ChEBI" id="CHEBI:23378"/>
        <label>A1</label>
    </ligand>
</feature>
<gene>
    <name type="primary">MT-CO2</name>
    <name type="synonym">COII</name>
    <name type="synonym">COX2</name>
    <name type="synonym">COXII</name>
    <name type="synonym">MTCO2</name>
</gene>
<comment type="function">
    <text evidence="2">Component of the cytochrome c oxidase, the last enzyme in the mitochondrial electron transport chain which drives oxidative phosphorylation. The respiratory chain contains 3 multisubunit complexes succinate dehydrogenase (complex II, CII), ubiquinol-cytochrome c oxidoreductase (cytochrome b-c1 complex, complex III, CIII) and cytochrome c oxidase (complex IV, CIV), that cooperate to transfer electrons derived from NADH and succinate to molecular oxygen, creating an electrochemical gradient over the inner membrane that drives transmembrane transport and the ATP synthase. Cytochrome c oxidase is the component of the respiratory chain that catalyzes the reduction of oxygen to water. Electrons originating from reduced cytochrome c in the intermembrane space (IMS) are transferred via the dinuclear copper A center (CU(A)) of subunit 2 and heme A of subunit 1 to the active site in subunit 1, a binuclear center (BNC) formed by heme A3 and copper B (CU(B)). The BNC reduces molecular oxygen to 2 water molecules using 4 electrons from cytochrome c in the IMS and 4 protons from the mitochondrial matrix.</text>
</comment>
<comment type="catalytic activity">
    <reaction evidence="2">
        <text>4 Fe(II)-[cytochrome c] + O2 + 8 H(+)(in) = 4 Fe(III)-[cytochrome c] + 2 H2O + 4 H(+)(out)</text>
        <dbReference type="Rhea" id="RHEA:11436"/>
        <dbReference type="Rhea" id="RHEA-COMP:10350"/>
        <dbReference type="Rhea" id="RHEA-COMP:14399"/>
        <dbReference type="ChEBI" id="CHEBI:15377"/>
        <dbReference type="ChEBI" id="CHEBI:15378"/>
        <dbReference type="ChEBI" id="CHEBI:15379"/>
        <dbReference type="ChEBI" id="CHEBI:29033"/>
        <dbReference type="ChEBI" id="CHEBI:29034"/>
        <dbReference type="EC" id="7.1.1.9"/>
    </reaction>
    <physiologicalReaction direction="left-to-right" evidence="2">
        <dbReference type="Rhea" id="RHEA:11437"/>
    </physiologicalReaction>
</comment>
<comment type="cofactor">
    <cofactor evidence="3">
        <name>Cu cation</name>
        <dbReference type="ChEBI" id="CHEBI:23378"/>
    </cofactor>
    <text evidence="3">Binds a dinuclear copper A center per subunit.</text>
</comment>
<comment type="subunit">
    <text evidence="1 3">Component of the cytochrome c oxidase (complex IV, CIV), a multisubunit enzyme composed of 14 subunits. The complex is composed of a catalytic core of 3 subunits MT-CO1, MT-CO2 and MT-CO3, encoded in the mitochondrial DNA, and 11 supernumerary subunits COX4I, COX5A, COX5B, COX6A, COX6B, COX6C, COX7A, COX7B, COX7C, COX8 and NDUFA4, which are encoded in the nuclear genome. The complex exists as a monomer or a dimer and forms supercomplexes (SCs) in the inner mitochondrial membrane with NADH-ubiquinone oxidoreductase (complex I, CI) and ubiquinol-cytochrome c oxidoreductase (cytochrome b-c1 complex, complex III, CIII), resulting in different assemblies (supercomplex SCI(1)III(2)IV(1) and megacomplex MCI(2)III(2)IV(2)) (By similarity). Found in a complex with TMEM177, COA6, COX18, COX20, SCO1 and SCO2. Interacts with TMEM177 in a COX20-dependent manner. Interacts with COX20. Interacts with COX16 (By similarity).</text>
</comment>
<comment type="subcellular location">
    <subcellularLocation>
        <location evidence="3">Mitochondrion inner membrane</location>
        <topology evidence="3">Multi-pass membrane protein</topology>
    </subcellularLocation>
</comment>
<comment type="similarity">
    <text evidence="4">Belongs to the cytochrome c oxidase subunit 2 family.</text>
</comment>
<dbReference type="EC" id="7.1.1.9"/>
<dbReference type="EMBL" id="U18837">
    <property type="protein sequence ID" value="AAA75613.1"/>
    <property type="molecule type" value="Genomic_DNA"/>
</dbReference>
<dbReference type="PIR" id="I48140">
    <property type="entry name" value="I48140"/>
</dbReference>
<dbReference type="SMR" id="P50689"/>
<dbReference type="GO" id="GO:0005743">
    <property type="term" value="C:mitochondrial inner membrane"/>
    <property type="evidence" value="ECO:0007669"/>
    <property type="project" value="UniProtKB-SubCell"/>
</dbReference>
<dbReference type="GO" id="GO:0045277">
    <property type="term" value="C:respiratory chain complex IV"/>
    <property type="evidence" value="ECO:0000250"/>
    <property type="project" value="UniProtKB"/>
</dbReference>
<dbReference type="GO" id="GO:0005507">
    <property type="term" value="F:copper ion binding"/>
    <property type="evidence" value="ECO:0007669"/>
    <property type="project" value="InterPro"/>
</dbReference>
<dbReference type="GO" id="GO:0004129">
    <property type="term" value="F:cytochrome-c oxidase activity"/>
    <property type="evidence" value="ECO:0007669"/>
    <property type="project" value="UniProtKB-EC"/>
</dbReference>
<dbReference type="GO" id="GO:0042773">
    <property type="term" value="P:ATP synthesis coupled electron transport"/>
    <property type="evidence" value="ECO:0007669"/>
    <property type="project" value="TreeGrafter"/>
</dbReference>
<dbReference type="CDD" id="cd13912">
    <property type="entry name" value="CcO_II_C"/>
    <property type="match status" value="1"/>
</dbReference>
<dbReference type="FunFam" id="1.10.287.90:FF:000001">
    <property type="entry name" value="Cytochrome c oxidase subunit 2"/>
    <property type="match status" value="1"/>
</dbReference>
<dbReference type="FunFam" id="2.60.40.420:FF:000001">
    <property type="entry name" value="Cytochrome c oxidase subunit 2"/>
    <property type="match status" value="1"/>
</dbReference>
<dbReference type="Gene3D" id="1.10.287.90">
    <property type="match status" value="1"/>
</dbReference>
<dbReference type="Gene3D" id="2.60.40.420">
    <property type="entry name" value="Cupredoxins - blue copper proteins"/>
    <property type="match status" value="1"/>
</dbReference>
<dbReference type="InterPro" id="IPR045187">
    <property type="entry name" value="CcO_II"/>
</dbReference>
<dbReference type="InterPro" id="IPR002429">
    <property type="entry name" value="CcO_II-like_C"/>
</dbReference>
<dbReference type="InterPro" id="IPR034210">
    <property type="entry name" value="CcO_II_C"/>
</dbReference>
<dbReference type="InterPro" id="IPR001505">
    <property type="entry name" value="Copper_CuA"/>
</dbReference>
<dbReference type="InterPro" id="IPR008972">
    <property type="entry name" value="Cupredoxin"/>
</dbReference>
<dbReference type="InterPro" id="IPR014222">
    <property type="entry name" value="Cyt_c_oxidase_su2"/>
</dbReference>
<dbReference type="InterPro" id="IPR011759">
    <property type="entry name" value="Cyt_c_oxidase_su2_TM_dom"/>
</dbReference>
<dbReference type="InterPro" id="IPR036257">
    <property type="entry name" value="Cyt_c_oxidase_su2_TM_sf"/>
</dbReference>
<dbReference type="NCBIfam" id="TIGR02866">
    <property type="entry name" value="CoxB"/>
    <property type="match status" value="1"/>
</dbReference>
<dbReference type="PANTHER" id="PTHR22888:SF9">
    <property type="entry name" value="CYTOCHROME C OXIDASE SUBUNIT 2"/>
    <property type="match status" value="1"/>
</dbReference>
<dbReference type="PANTHER" id="PTHR22888">
    <property type="entry name" value="CYTOCHROME C OXIDASE, SUBUNIT II"/>
    <property type="match status" value="1"/>
</dbReference>
<dbReference type="Pfam" id="PF00116">
    <property type="entry name" value="COX2"/>
    <property type="match status" value="1"/>
</dbReference>
<dbReference type="Pfam" id="PF02790">
    <property type="entry name" value="COX2_TM"/>
    <property type="match status" value="1"/>
</dbReference>
<dbReference type="PRINTS" id="PR01166">
    <property type="entry name" value="CYCOXIDASEII"/>
</dbReference>
<dbReference type="SUPFAM" id="SSF49503">
    <property type="entry name" value="Cupredoxins"/>
    <property type="match status" value="1"/>
</dbReference>
<dbReference type="SUPFAM" id="SSF81464">
    <property type="entry name" value="Cytochrome c oxidase subunit II-like, transmembrane region"/>
    <property type="match status" value="1"/>
</dbReference>
<dbReference type="PROSITE" id="PS00078">
    <property type="entry name" value="COX2"/>
    <property type="match status" value="1"/>
</dbReference>
<dbReference type="PROSITE" id="PS50857">
    <property type="entry name" value="COX2_CUA"/>
    <property type="match status" value="1"/>
</dbReference>
<dbReference type="PROSITE" id="PS50999">
    <property type="entry name" value="COX2_TM"/>
    <property type="match status" value="1"/>
</dbReference>
<evidence type="ECO:0000250" key="1">
    <source>
        <dbReference type="UniProtKB" id="P00403"/>
    </source>
</evidence>
<evidence type="ECO:0000250" key="2">
    <source>
        <dbReference type="UniProtKB" id="P00410"/>
    </source>
</evidence>
<evidence type="ECO:0000250" key="3">
    <source>
        <dbReference type="UniProtKB" id="P68530"/>
    </source>
</evidence>
<evidence type="ECO:0000305" key="4"/>
<organism>
    <name type="scientific">Georychus capensis</name>
    <name type="common">Cape mole rat</name>
    <name type="synonym">Mus capensis</name>
    <dbReference type="NCBI Taxonomy" id="10177"/>
    <lineage>
        <taxon>Eukaryota</taxon>
        <taxon>Metazoa</taxon>
        <taxon>Chordata</taxon>
        <taxon>Craniata</taxon>
        <taxon>Vertebrata</taxon>
        <taxon>Euteleostomi</taxon>
        <taxon>Mammalia</taxon>
        <taxon>Eutheria</taxon>
        <taxon>Euarchontoglires</taxon>
        <taxon>Glires</taxon>
        <taxon>Rodentia</taxon>
        <taxon>Hystricomorpha</taxon>
        <taxon>Bathyergidae</taxon>
        <taxon>Georychus</taxon>
    </lineage>
</organism>
<name>COX2_GEOCP</name>
<sequence length="227" mass="25946">MAYPHQLGFQDATSPIMEELLSFHDHTLMIVFLISSLVLYLISLMLTTKLTHTSTMDAQEVETVWTILPAIILIMIALPSLRILYMMDEINNPLLTVKTMGHQWYWTYEYTDYEELNFDSYMVPTTDLNPGELRLLEVDNRVVLPMETPIRMLISSEDVLHSWTVPSMGLKTDAIPGRLNQATLTSSRPGLFYGQCSEICGSNHSFMPIVIEMVPLKSFENWTTSMT</sequence>
<protein>
    <recommendedName>
        <fullName>Cytochrome c oxidase subunit 2</fullName>
        <ecNumber>7.1.1.9</ecNumber>
    </recommendedName>
    <alternativeName>
        <fullName>Cytochrome c oxidase polypeptide II</fullName>
    </alternativeName>
</protein>
<geneLocation type="mitochondrion"/>
<keyword id="KW-0186">Copper</keyword>
<keyword id="KW-0249">Electron transport</keyword>
<keyword id="KW-0460">Magnesium</keyword>
<keyword id="KW-0472">Membrane</keyword>
<keyword id="KW-0479">Metal-binding</keyword>
<keyword id="KW-0496">Mitochondrion</keyword>
<keyword id="KW-0999">Mitochondrion inner membrane</keyword>
<keyword id="KW-0679">Respiratory chain</keyword>
<keyword id="KW-1278">Translocase</keyword>
<keyword id="KW-0812">Transmembrane</keyword>
<keyword id="KW-1133">Transmembrane helix</keyword>
<keyword id="KW-0813">Transport</keyword>